<keyword id="KW-0016">Alginate biosynthesis</keyword>
<keyword id="KW-0413">Isomerase</keyword>
<keyword id="KW-0448">Lipopolysaccharide biosynthesis</keyword>
<keyword id="KW-0460">Magnesium</keyword>
<keyword id="KW-0479">Metal-binding</keyword>
<keyword id="KW-0511">Multifunctional enzyme</keyword>
<keyword id="KW-0597">Phosphoprotein</keyword>
<keyword id="KW-0843">Virulence</keyword>
<comment type="function">
    <text evidence="1">Highly reversible phosphoryltransferase. The phosphomannomutase activity produces a precursor for alginate polymerization, the alginate layer causes a mucoid phenotype and provides a protective barrier against host immune defenses and antibiotics. Also involved in core lipopolysaccaride (LPS) biosynthesis due to its phosphoglucomutase activity. Essential for rhamnolipid production, an exoproduct correlated with pathogenicity. Required for biofilm production. The reaction proceeds via 2 processive phosphoryl transferase reactions; first from enzyme-phospho-Ser-108 to the substrate (generating a bisphosphorylated substrate intermediate and a dephosphorylated enzyme), a 180 degree rotation of the intermediate (probably aided by movement of domain 4), and subsequent transfer of phosphate back to the enzyme.</text>
</comment>
<comment type="catalytic activity">
    <reaction evidence="1">
        <text>alpha-D-mannose 1-phosphate = D-mannose 6-phosphate</text>
        <dbReference type="Rhea" id="RHEA:11140"/>
        <dbReference type="ChEBI" id="CHEBI:58409"/>
        <dbReference type="ChEBI" id="CHEBI:58735"/>
        <dbReference type="EC" id="5.4.2.8"/>
    </reaction>
</comment>
<comment type="catalytic activity">
    <reaction evidence="1">
        <text>alpha-D-glucose 1-phosphate = alpha-D-glucose 6-phosphate</text>
        <dbReference type="Rhea" id="RHEA:23536"/>
        <dbReference type="ChEBI" id="CHEBI:58225"/>
        <dbReference type="ChEBI" id="CHEBI:58601"/>
        <dbReference type="EC" id="5.4.2.2"/>
    </reaction>
</comment>
<comment type="cofactor">
    <cofactor>
        <name>Mg(2+)</name>
        <dbReference type="ChEBI" id="CHEBI:18420"/>
    </cofactor>
    <text evidence="1">Binds 1 Mg(2+) ion per subunit.</text>
</comment>
<comment type="pathway">
    <text>Nucleotide-sugar biosynthesis; GDP-alpha-D-mannose biosynthesis; alpha-D-mannose 1-phosphate from D-fructose 6-phosphate: step 2/2.</text>
</comment>
<comment type="pathway">
    <text>Bacterial outer membrane biogenesis; lipopolysaccharide biosynthesis.</text>
</comment>
<comment type="subunit">
    <text evidence="1">Monomer.</text>
</comment>
<comment type="similarity">
    <text evidence="3">Belongs to the phosphohexose mutase family.</text>
</comment>
<comment type="sequence caution" evidence="3">
    <conflict type="erroneous initiation">
        <sequence resource="EMBL-CDS" id="ABJ14705"/>
    </conflict>
    <text>Extended N-terminus.</text>
</comment>
<proteinExistence type="evidence at protein level"/>
<accession>Q02E40</accession>
<organism>
    <name type="scientific">Pseudomonas aeruginosa (strain UCBPP-PA14)</name>
    <dbReference type="NCBI Taxonomy" id="208963"/>
    <lineage>
        <taxon>Bacteria</taxon>
        <taxon>Pseudomonadati</taxon>
        <taxon>Pseudomonadota</taxon>
        <taxon>Gammaproteobacteria</taxon>
        <taxon>Pseudomonadales</taxon>
        <taxon>Pseudomonadaceae</taxon>
        <taxon>Pseudomonas</taxon>
    </lineage>
</organism>
<protein>
    <recommendedName>
        <fullName>Phosphomannomutase/phosphoglucomutase</fullName>
        <shortName>PMM / PGM</shortName>
        <ecNumber evidence="1">5.4.2.2</ecNumber>
        <ecNumber evidence="1">5.4.2.8</ecNumber>
    </recommendedName>
</protein>
<evidence type="ECO:0000250" key="1">
    <source>
        <dbReference type="UniProtKB" id="P26276"/>
    </source>
</evidence>
<evidence type="ECO:0000269" key="2">
    <source>
    </source>
</evidence>
<evidence type="ECO:0000305" key="3"/>
<sequence>MSTAKAPTLPASIFRAYDIRGVVGDTLTAETAYWIGRAIGSESLARGEPCVAVGRDGRLSGPELVKQLIQGLVDCGCQVSDVGMVPTPVLYYAANVLEGKSGVMLTGSHNPPDYNGFKIVVAGETLANEQIQALRERIEKNDLASGVGSVEQVDILPRYFKQIRDDIAMAKPMKVVVDCGNGVAGVIAPQLIEALGCSVIPLYCEVDGNFPNHHPDPGKPENLKDLIAKVKAENADLGLAFDGDGDRVGVVTNTGTIIYPDRLLMLFAKDVVSRNPGADIIFDVKCTRRLIALISGYGGRPVMWKTGHSLIKKKMKETGALLAGEMSGHVFFKERWFGFDDGIYSAARLLEILSQDQRDSEHVFSAFPSDISTPEINITVTEDSKFAIIEALQRDAQWGEGNITTLDGVRVDYPKGWGLVRASNTTPVLVLRFEADTEEELERIKTVFRNQLKAVDSSLPVPF</sequence>
<reference key="1">
    <citation type="journal article" date="2006" name="Genome Biol.">
        <title>Genomic analysis reveals that Pseudomonas aeruginosa virulence is combinatorial.</title>
        <authorList>
            <person name="Lee D.G."/>
            <person name="Urbach J.M."/>
            <person name="Wu G."/>
            <person name="Liberati N.T."/>
            <person name="Feinbaum R.L."/>
            <person name="Miyata S."/>
            <person name="Diggins L.T."/>
            <person name="He J."/>
            <person name="Saucier M."/>
            <person name="Deziel E."/>
            <person name="Friedman L."/>
            <person name="Li L."/>
            <person name="Grills G."/>
            <person name="Montgomery K."/>
            <person name="Kucherlapati R."/>
            <person name="Rahme L.G."/>
            <person name="Ausubel F.M."/>
        </authorList>
    </citation>
    <scope>NUCLEOTIDE SEQUENCE [LARGE SCALE GENOMIC DNA]</scope>
    <source>
        <strain>UCBPP-PA14</strain>
    </source>
</reference>
<reference key="2">
    <citation type="journal article" date="2014" name="Anal. Bioanal. Chem.">
        <title>Potential of liquid-isoelectric-focusing protein fractionation to improve phosphoprotein characterization of Pseudomonas aeruginosa PA14.</title>
        <authorList>
            <person name="Ouidir T."/>
            <person name="Jarnier F."/>
            <person name="Cosette P."/>
            <person name="Jouenne T."/>
            <person name="Hardouin J."/>
        </authorList>
    </citation>
    <scope>IDENTIFICATION BY MASS SPECTROMETRY</scope>
    <scope>ACTIVE SITE</scope>
    <scope>PHOSPHORYLATION AT SER-108</scope>
    <source>
        <strain>UCBPP-PA14</strain>
    </source>
</reference>
<gene>
    <name type="primary">algC</name>
    <name type="ordered locus">PA14_70270</name>
</gene>
<dbReference type="EC" id="5.4.2.2" evidence="1"/>
<dbReference type="EC" id="5.4.2.8" evidence="1"/>
<dbReference type="EMBL" id="CP000438">
    <property type="protein sequence ID" value="ABJ14705.1"/>
    <property type="status" value="ALT_INIT"/>
    <property type="molecule type" value="Genomic_DNA"/>
</dbReference>
<dbReference type="BMRB" id="Q02E40"/>
<dbReference type="SMR" id="Q02E40"/>
<dbReference type="iPTMnet" id="Q02E40"/>
<dbReference type="KEGG" id="pau:PA14_70270"/>
<dbReference type="PseudoCAP" id="PA14_70270"/>
<dbReference type="HOGENOM" id="CLU_013562_0_1_6"/>
<dbReference type="UniPathway" id="UPA00030"/>
<dbReference type="UniPathway" id="UPA00126">
    <property type="reaction ID" value="UER00424"/>
</dbReference>
<dbReference type="Proteomes" id="UP000000653">
    <property type="component" value="Chromosome"/>
</dbReference>
<dbReference type="GO" id="GO:0000287">
    <property type="term" value="F:magnesium ion binding"/>
    <property type="evidence" value="ECO:0007669"/>
    <property type="project" value="InterPro"/>
</dbReference>
<dbReference type="GO" id="GO:0004614">
    <property type="term" value="F:phosphoglucomutase activity"/>
    <property type="evidence" value="ECO:0007669"/>
    <property type="project" value="UniProtKB-EC"/>
</dbReference>
<dbReference type="GO" id="GO:0004615">
    <property type="term" value="F:phosphomannomutase activity"/>
    <property type="evidence" value="ECO:0007669"/>
    <property type="project" value="UniProtKB-EC"/>
</dbReference>
<dbReference type="GO" id="GO:0042121">
    <property type="term" value="P:alginic acid biosynthetic process"/>
    <property type="evidence" value="ECO:0007669"/>
    <property type="project" value="UniProtKB-KW"/>
</dbReference>
<dbReference type="GO" id="GO:0009298">
    <property type="term" value="P:GDP-mannose biosynthetic process"/>
    <property type="evidence" value="ECO:0007669"/>
    <property type="project" value="UniProtKB-UniPathway"/>
</dbReference>
<dbReference type="GO" id="GO:0009103">
    <property type="term" value="P:lipopolysaccharide biosynthetic process"/>
    <property type="evidence" value="ECO:0007669"/>
    <property type="project" value="UniProtKB-UniPathway"/>
</dbReference>
<dbReference type="CDD" id="cd03089">
    <property type="entry name" value="PMM_PGM"/>
    <property type="match status" value="1"/>
</dbReference>
<dbReference type="FunFam" id="3.40.120.10:FF:000001">
    <property type="entry name" value="Phosphoglucosamine mutase"/>
    <property type="match status" value="1"/>
</dbReference>
<dbReference type="FunFam" id="3.40.120.10:FF:000025">
    <property type="entry name" value="Phosphomannomutase"/>
    <property type="match status" value="1"/>
</dbReference>
<dbReference type="FunFam" id="3.30.310.50:FF:000007">
    <property type="entry name" value="Phosphomannomutase/phosphoglucomutase"/>
    <property type="match status" value="1"/>
</dbReference>
<dbReference type="FunFam" id="3.40.120.10:FF:000021">
    <property type="entry name" value="Phosphomannomutase/phosphoglucomutase"/>
    <property type="match status" value="1"/>
</dbReference>
<dbReference type="Gene3D" id="3.40.120.10">
    <property type="entry name" value="Alpha-D-Glucose-1,6-Bisphosphate, subunit A, domain 3"/>
    <property type="match status" value="3"/>
</dbReference>
<dbReference type="Gene3D" id="3.30.310.50">
    <property type="entry name" value="Alpha-D-phosphohexomutase, C-terminal domain"/>
    <property type="match status" value="1"/>
</dbReference>
<dbReference type="InterPro" id="IPR005844">
    <property type="entry name" value="A-D-PHexomutase_a/b/a-I"/>
</dbReference>
<dbReference type="InterPro" id="IPR016055">
    <property type="entry name" value="A-D-PHexomutase_a/b/a-I/II/III"/>
</dbReference>
<dbReference type="InterPro" id="IPR005845">
    <property type="entry name" value="A-D-PHexomutase_a/b/a-II"/>
</dbReference>
<dbReference type="InterPro" id="IPR005846">
    <property type="entry name" value="A-D-PHexomutase_a/b/a-III"/>
</dbReference>
<dbReference type="InterPro" id="IPR005843">
    <property type="entry name" value="A-D-PHexomutase_C"/>
</dbReference>
<dbReference type="InterPro" id="IPR036900">
    <property type="entry name" value="A-D-PHexomutase_C_sf"/>
</dbReference>
<dbReference type="InterPro" id="IPR016066">
    <property type="entry name" value="A-D-PHexomutase_CS"/>
</dbReference>
<dbReference type="InterPro" id="IPR005841">
    <property type="entry name" value="Alpha-D-phosphohexomutase_SF"/>
</dbReference>
<dbReference type="PANTHER" id="PTHR43771">
    <property type="entry name" value="PHOSPHOMANNOMUTASE"/>
    <property type="match status" value="1"/>
</dbReference>
<dbReference type="PANTHER" id="PTHR43771:SF2">
    <property type="entry name" value="PHOSPHOMANNOMUTASE_PHOSPHOGLUCOMUTASE"/>
    <property type="match status" value="1"/>
</dbReference>
<dbReference type="Pfam" id="PF02878">
    <property type="entry name" value="PGM_PMM_I"/>
    <property type="match status" value="1"/>
</dbReference>
<dbReference type="Pfam" id="PF02879">
    <property type="entry name" value="PGM_PMM_II"/>
    <property type="match status" value="1"/>
</dbReference>
<dbReference type="Pfam" id="PF02880">
    <property type="entry name" value="PGM_PMM_III"/>
    <property type="match status" value="1"/>
</dbReference>
<dbReference type="Pfam" id="PF00408">
    <property type="entry name" value="PGM_PMM_IV"/>
    <property type="match status" value="1"/>
</dbReference>
<dbReference type="PRINTS" id="PR00509">
    <property type="entry name" value="PGMPMM"/>
</dbReference>
<dbReference type="SUPFAM" id="SSF55957">
    <property type="entry name" value="Phosphoglucomutase, C-terminal domain"/>
    <property type="match status" value="1"/>
</dbReference>
<dbReference type="SUPFAM" id="SSF53738">
    <property type="entry name" value="Phosphoglucomutase, first 3 domains"/>
    <property type="match status" value="3"/>
</dbReference>
<dbReference type="PROSITE" id="PS00710">
    <property type="entry name" value="PGM_PMM"/>
    <property type="match status" value="1"/>
</dbReference>
<name>ALGC_PSEAB</name>
<feature type="chain" id="PRO_0000431531" description="Phosphomannomutase/phosphoglucomutase">
    <location>
        <begin position="1"/>
        <end position="463"/>
    </location>
</feature>
<feature type="active site" description="Non-phosphorylated intermediate" evidence="2">
    <location>
        <position position="108"/>
    </location>
</feature>
<feature type="binding site" evidence="1">
    <location>
        <position position="17"/>
    </location>
    <ligand>
        <name>alpha-D-glucose 1-phosphate</name>
        <dbReference type="ChEBI" id="CHEBI:58601"/>
    </ligand>
</feature>
<feature type="binding site" evidence="1">
    <location>
        <position position="17"/>
    </location>
    <ligand>
        <name>alpha-D-mannose 1-phosphate</name>
        <dbReference type="ChEBI" id="CHEBI:58409"/>
    </ligand>
</feature>
<feature type="binding site" description="via phosphate group" evidence="1">
    <location>
        <position position="108"/>
    </location>
    <ligand>
        <name>Mg(2+)</name>
        <dbReference type="ChEBI" id="CHEBI:18420"/>
    </ligand>
</feature>
<feature type="binding site" evidence="1">
    <location>
        <position position="242"/>
    </location>
    <ligand>
        <name>Mg(2+)</name>
        <dbReference type="ChEBI" id="CHEBI:18420"/>
    </ligand>
</feature>
<feature type="binding site" evidence="1">
    <location>
        <position position="244"/>
    </location>
    <ligand>
        <name>Mg(2+)</name>
        <dbReference type="ChEBI" id="CHEBI:18420"/>
    </ligand>
</feature>
<feature type="binding site" evidence="1">
    <location>
        <position position="246"/>
    </location>
    <ligand>
        <name>Mg(2+)</name>
        <dbReference type="ChEBI" id="CHEBI:18420"/>
    </ligand>
</feature>
<feature type="binding site" evidence="1">
    <location>
        <position position="285"/>
    </location>
    <ligand>
        <name>alpha-D-glucose 1-phosphate</name>
        <dbReference type="ChEBI" id="CHEBI:58601"/>
    </ligand>
</feature>
<feature type="binding site" evidence="1">
    <location>
        <position position="308"/>
    </location>
    <ligand>
        <name>alpha-D-glucose 1-phosphate</name>
        <dbReference type="ChEBI" id="CHEBI:58601"/>
    </ligand>
</feature>
<feature type="binding site" evidence="1">
    <location>
        <position position="308"/>
    </location>
    <ligand>
        <name>alpha-D-mannose 1-phosphate</name>
        <dbReference type="ChEBI" id="CHEBI:58409"/>
    </ligand>
</feature>
<feature type="binding site" evidence="1">
    <location>
        <begin position="325"/>
        <end position="329"/>
    </location>
    <ligand>
        <name>alpha-D-glucose 1-phosphate</name>
        <dbReference type="ChEBI" id="CHEBI:58601"/>
    </ligand>
</feature>
<feature type="binding site" evidence="1">
    <location>
        <begin position="325"/>
        <end position="329"/>
    </location>
    <ligand>
        <name>alpha-D-mannose 1-phosphate</name>
        <dbReference type="ChEBI" id="CHEBI:58409"/>
    </ligand>
</feature>
<feature type="binding site" evidence="1">
    <location>
        <begin position="421"/>
        <end position="425"/>
    </location>
    <ligand>
        <name>alpha-D-glucose 1-phosphate</name>
        <dbReference type="ChEBI" id="CHEBI:58601"/>
    </ligand>
</feature>
<feature type="binding site" evidence="1">
    <location>
        <begin position="421"/>
        <end position="425"/>
    </location>
    <ligand>
        <name>alpha-D-mannose 1-phosphate</name>
        <dbReference type="ChEBI" id="CHEBI:58409"/>
    </ligand>
</feature>
<feature type="modified residue" description="Phosphoserine" evidence="2">
    <location>
        <position position="108"/>
    </location>
</feature>